<evidence type="ECO:0000255" key="1">
    <source>
        <dbReference type="HAMAP-Rule" id="MF_00206"/>
    </source>
</evidence>
<evidence type="ECO:0000255" key="2">
    <source>
        <dbReference type="PROSITE-ProRule" id="PRU01266"/>
    </source>
</evidence>
<proteinExistence type="inferred from homology"/>
<keyword id="KW-0004">4Fe-4S</keyword>
<keyword id="KW-0963">Cytoplasm</keyword>
<keyword id="KW-0408">Iron</keyword>
<keyword id="KW-0411">Iron-sulfur</keyword>
<keyword id="KW-0479">Metal-binding</keyword>
<keyword id="KW-1185">Reference proteome</keyword>
<keyword id="KW-0949">S-adenosyl-L-methionine</keyword>
<keyword id="KW-0808">Transferase</keyword>
<comment type="function">
    <text evidence="1">Catalyzes the radical-mediated insertion of two sulfur atoms into the C-6 and C-8 positions of the octanoyl moiety bound to the lipoyl domains of lipoate-dependent enzymes, thereby converting the octanoylated domains into lipoylated derivatives.</text>
</comment>
<comment type="catalytic activity">
    <reaction evidence="1">
        <text>[[Fe-S] cluster scaffold protein carrying a second [4Fe-4S](2+) cluster] + N(6)-octanoyl-L-lysyl-[protein] + 2 oxidized [2Fe-2S]-[ferredoxin] + 2 S-adenosyl-L-methionine + 4 H(+) = [[Fe-S] cluster scaffold protein] + N(6)-[(R)-dihydrolipoyl]-L-lysyl-[protein] + 4 Fe(3+) + 2 hydrogen sulfide + 2 5'-deoxyadenosine + 2 L-methionine + 2 reduced [2Fe-2S]-[ferredoxin]</text>
        <dbReference type="Rhea" id="RHEA:16585"/>
        <dbReference type="Rhea" id="RHEA-COMP:9928"/>
        <dbReference type="Rhea" id="RHEA-COMP:10000"/>
        <dbReference type="Rhea" id="RHEA-COMP:10001"/>
        <dbReference type="Rhea" id="RHEA-COMP:10475"/>
        <dbReference type="Rhea" id="RHEA-COMP:14568"/>
        <dbReference type="Rhea" id="RHEA-COMP:14569"/>
        <dbReference type="ChEBI" id="CHEBI:15378"/>
        <dbReference type="ChEBI" id="CHEBI:17319"/>
        <dbReference type="ChEBI" id="CHEBI:29034"/>
        <dbReference type="ChEBI" id="CHEBI:29919"/>
        <dbReference type="ChEBI" id="CHEBI:33722"/>
        <dbReference type="ChEBI" id="CHEBI:33737"/>
        <dbReference type="ChEBI" id="CHEBI:33738"/>
        <dbReference type="ChEBI" id="CHEBI:57844"/>
        <dbReference type="ChEBI" id="CHEBI:59789"/>
        <dbReference type="ChEBI" id="CHEBI:78809"/>
        <dbReference type="ChEBI" id="CHEBI:83100"/>
        <dbReference type="EC" id="2.8.1.8"/>
    </reaction>
</comment>
<comment type="cofactor">
    <cofactor evidence="1">
        <name>[4Fe-4S] cluster</name>
        <dbReference type="ChEBI" id="CHEBI:49883"/>
    </cofactor>
    <text evidence="1">Binds 2 [4Fe-4S] clusters per subunit. One cluster is coordinated with 3 cysteines and an exchangeable S-adenosyl-L-methionine.</text>
</comment>
<comment type="pathway">
    <text evidence="1">Protein modification; protein lipoylation via endogenous pathway; protein N(6)-(lipoyl)lysine from octanoyl-[acyl-carrier-protein]: step 2/2.</text>
</comment>
<comment type="subcellular location">
    <subcellularLocation>
        <location evidence="1">Cytoplasm</location>
    </subcellularLocation>
</comment>
<comment type="similarity">
    <text evidence="1">Belongs to the radical SAM superfamily. Lipoyl synthase family.</text>
</comment>
<organism>
    <name type="scientific">Desulfotalea psychrophila (strain LSv54 / DSM 12343)</name>
    <dbReference type="NCBI Taxonomy" id="177439"/>
    <lineage>
        <taxon>Bacteria</taxon>
        <taxon>Pseudomonadati</taxon>
        <taxon>Thermodesulfobacteriota</taxon>
        <taxon>Desulfobulbia</taxon>
        <taxon>Desulfobulbales</taxon>
        <taxon>Desulfocapsaceae</taxon>
        <taxon>Desulfotalea</taxon>
    </lineage>
</organism>
<gene>
    <name evidence="1" type="primary">lipA</name>
    <name type="ordered locus">DP0296</name>
</gene>
<accession>Q6ARK0</accession>
<sequence length="299" mass="33578">MACSHQKNEQMRVGKPKWLRRSLPTGPEYEKIRTLLKGSGLTTVCQEAQCPNQFECYSKGTATFMIMGDHCTRNCRFCAVAHGPKALPDEDEAERVADAVSLLGLRYAVITSVTRDDLADGGASCFVRVIEAIRKKNPKTLIEVLIPDLAGNWGALQTILDARPDVLNHNIETVPRLYSVARPGAEYRRSLELLREVRRRAPQMVTKTGMMLGLGEETEELYATWQDLRESDCDILTMGQYLQPTVDHLLVQRFVEPTEFDRLGDVALAKDFLAVASGPFVRSSYEAEKLFRKAELARK</sequence>
<protein>
    <recommendedName>
        <fullName evidence="1">Lipoyl synthase</fullName>
        <ecNumber evidence="1">2.8.1.8</ecNumber>
    </recommendedName>
    <alternativeName>
        <fullName evidence="1">Lip-syn</fullName>
        <shortName evidence="1">LS</shortName>
    </alternativeName>
    <alternativeName>
        <fullName evidence="1">Lipoate synthase</fullName>
    </alternativeName>
    <alternativeName>
        <fullName evidence="1">Lipoic acid synthase</fullName>
    </alternativeName>
    <alternativeName>
        <fullName evidence="1">Sulfur insertion protein LipA</fullName>
    </alternativeName>
</protein>
<name>LIPA_DESPS</name>
<dbReference type="EC" id="2.8.1.8" evidence="1"/>
<dbReference type="EMBL" id="CR522870">
    <property type="protein sequence ID" value="CAG35025.1"/>
    <property type="molecule type" value="Genomic_DNA"/>
</dbReference>
<dbReference type="RefSeq" id="WP_011187541.1">
    <property type="nucleotide sequence ID" value="NC_006138.1"/>
</dbReference>
<dbReference type="SMR" id="Q6ARK0"/>
<dbReference type="STRING" id="177439.DP0296"/>
<dbReference type="KEGG" id="dps:DP0296"/>
<dbReference type="eggNOG" id="COG0320">
    <property type="taxonomic scope" value="Bacteria"/>
</dbReference>
<dbReference type="HOGENOM" id="CLU_033144_2_1_7"/>
<dbReference type="OrthoDB" id="9787898at2"/>
<dbReference type="UniPathway" id="UPA00538">
    <property type="reaction ID" value="UER00593"/>
</dbReference>
<dbReference type="Proteomes" id="UP000000602">
    <property type="component" value="Chromosome"/>
</dbReference>
<dbReference type="GO" id="GO:0005737">
    <property type="term" value="C:cytoplasm"/>
    <property type="evidence" value="ECO:0007669"/>
    <property type="project" value="UniProtKB-SubCell"/>
</dbReference>
<dbReference type="GO" id="GO:0051539">
    <property type="term" value="F:4 iron, 4 sulfur cluster binding"/>
    <property type="evidence" value="ECO:0007669"/>
    <property type="project" value="UniProtKB-UniRule"/>
</dbReference>
<dbReference type="GO" id="GO:0016992">
    <property type="term" value="F:lipoate synthase activity"/>
    <property type="evidence" value="ECO:0007669"/>
    <property type="project" value="UniProtKB-UniRule"/>
</dbReference>
<dbReference type="GO" id="GO:0046872">
    <property type="term" value="F:metal ion binding"/>
    <property type="evidence" value="ECO:0007669"/>
    <property type="project" value="UniProtKB-KW"/>
</dbReference>
<dbReference type="CDD" id="cd01335">
    <property type="entry name" value="Radical_SAM"/>
    <property type="match status" value="1"/>
</dbReference>
<dbReference type="FunFam" id="3.20.20.70:FF:000040">
    <property type="entry name" value="Lipoyl synthase"/>
    <property type="match status" value="1"/>
</dbReference>
<dbReference type="Gene3D" id="3.20.20.70">
    <property type="entry name" value="Aldolase class I"/>
    <property type="match status" value="1"/>
</dbReference>
<dbReference type="HAMAP" id="MF_00206">
    <property type="entry name" value="Lipoyl_synth"/>
    <property type="match status" value="1"/>
</dbReference>
<dbReference type="InterPro" id="IPR013785">
    <property type="entry name" value="Aldolase_TIM"/>
</dbReference>
<dbReference type="InterPro" id="IPR006638">
    <property type="entry name" value="Elp3/MiaA/NifB-like_rSAM"/>
</dbReference>
<dbReference type="InterPro" id="IPR031691">
    <property type="entry name" value="LIAS_N"/>
</dbReference>
<dbReference type="InterPro" id="IPR003698">
    <property type="entry name" value="Lipoyl_synth"/>
</dbReference>
<dbReference type="InterPro" id="IPR007197">
    <property type="entry name" value="rSAM"/>
</dbReference>
<dbReference type="NCBIfam" id="TIGR00510">
    <property type="entry name" value="lipA"/>
    <property type="match status" value="1"/>
</dbReference>
<dbReference type="NCBIfam" id="NF004019">
    <property type="entry name" value="PRK05481.1"/>
    <property type="match status" value="1"/>
</dbReference>
<dbReference type="NCBIfam" id="NF009544">
    <property type="entry name" value="PRK12928.1"/>
    <property type="match status" value="1"/>
</dbReference>
<dbReference type="PANTHER" id="PTHR10949">
    <property type="entry name" value="LIPOYL SYNTHASE"/>
    <property type="match status" value="1"/>
</dbReference>
<dbReference type="PANTHER" id="PTHR10949:SF0">
    <property type="entry name" value="LIPOYL SYNTHASE, MITOCHONDRIAL"/>
    <property type="match status" value="1"/>
</dbReference>
<dbReference type="Pfam" id="PF16881">
    <property type="entry name" value="LIAS_N"/>
    <property type="match status" value="1"/>
</dbReference>
<dbReference type="Pfam" id="PF04055">
    <property type="entry name" value="Radical_SAM"/>
    <property type="match status" value="1"/>
</dbReference>
<dbReference type="PIRSF" id="PIRSF005963">
    <property type="entry name" value="Lipoyl_synth"/>
    <property type="match status" value="1"/>
</dbReference>
<dbReference type="SFLD" id="SFLDF00271">
    <property type="entry name" value="lipoyl_synthase"/>
    <property type="match status" value="1"/>
</dbReference>
<dbReference type="SFLD" id="SFLDS00029">
    <property type="entry name" value="Radical_SAM"/>
    <property type="match status" value="1"/>
</dbReference>
<dbReference type="SMART" id="SM00729">
    <property type="entry name" value="Elp3"/>
    <property type="match status" value="1"/>
</dbReference>
<dbReference type="SUPFAM" id="SSF102114">
    <property type="entry name" value="Radical SAM enzymes"/>
    <property type="match status" value="1"/>
</dbReference>
<dbReference type="PROSITE" id="PS51918">
    <property type="entry name" value="RADICAL_SAM"/>
    <property type="match status" value="1"/>
</dbReference>
<reference key="1">
    <citation type="journal article" date="2004" name="Environ. Microbiol.">
        <title>The genome of Desulfotalea psychrophila, a sulfate-reducing bacterium from permanently cold Arctic sediments.</title>
        <authorList>
            <person name="Rabus R."/>
            <person name="Ruepp A."/>
            <person name="Frickey T."/>
            <person name="Rattei T."/>
            <person name="Fartmann B."/>
            <person name="Stark M."/>
            <person name="Bauer M."/>
            <person name="Zibat A."/>
            <person name="Lombardot T."/>
            <person name="Becker I."/>
            <person name="Amann J."/>
            <person name="Gellner K."/>
            <person name="Teeling H."/>
            <person name="Leuschner W.D."/>
            <person name="Gloeckner F.-O."/>
            <person name="Lupas A.N."/>
            <person name="Amann R."/>
            <person name="Klenk H.-P."/>
        </authorList>
    </citation>
    <scope>NUCLEOTIDE SEQUENCE [LARGE SCALE GENOMIC DNA]</scope>
    <source>
        <strain>DSM 12343 / LSv54</strain>
    </source>
</reference>
<feature type="chain" id="PRO_0000325244" description="Lipoyl synthase">
    <location>
        <begin position="1"/>
        <end position="299"/>
    </location>
</feature>
<feature type="domain" description="Radical SAM core" evidence="2">
    <location>
        <begin position="57"/>
        <end position="273"/>
    </location>
</feature>
<feature type="binding site" evidence="1">
    <location>
        <position position="45"/>
    </location>
    <ligand>
        <name>[4Fe-4S] cluster</name>
        <dbReference type="ChEBI" id="CHEBI:49883"/>
        <label>1</label>
    </ligand>
</feature>
<feature type="binding site" evidence="1">
    <location>
        <position position="50"/>
    </location>
    <ligand>
        <name>[4Fe-4S] cluster</name>
        <dbReference type="ChEBI" id="CHEBI:49883"/>
        <label>1</label>
    </ligand>
</feature>
<feature type="binding site" evidence="1">
    <location>
        <position position="56"/>
    </location>
    <ligand>
        <name>[4Fe-4S] cluster</name>
        <dbReference type="ChEBI" id="CHEBI:49883"/>
        <label>1</label>
    </ligand>
</feature>
<feature type="binding site" evidence="1">
    <location>
        <position position="71"/>
    </location>
    <ligand>
        <name>[4Fe-4S] cluster</name>
        <dbReference type="ChEBI" id="CHEBI:49883"/>
        <label>2</label>
        <note>4Fe-4S-S-AdoMet</note>
    </ligand>
</feature>
<feature type="binding site" evidence="1">
    <location>
        <position position="75"/>
    </location>
    <ligand>
        <name>[4Fe-4S] cluster</name>
        <dbReference type="ChEBI" id="CHEBI:49883"/>
        <label>2</label>
        <note>4Fe-4S-S-AdoMet</note>
    </ligand>
</feature>
<feature type="binding site" evidence="1">
    <location>
        <position position="78"/>
    </location>
    <ligand>
        <name>[4Fe-4S] cluster</name>
        <dbReference type="ChEBI" id="CHEBI:49883"/>
        <label>2</label>
        <note>4Fe-4S-S-AdoMet</note>
    </ligand>
</feature>
<feature type="binding site" evidence="1">
    <location>
        <position position="284"/>
    </location>
    <ligand>
        <name>[4Fe-4S] cluster</name>
        <dbReference type="ChEBI" id="CHEBI:49883"/>
        <label>1</label>
    </ligand>
</feature>